<accession>Q94JY4</accession>
<accession>Q9ZQ49</accession>
<gene>
    <name type="primary">BRK1</name>
    <name type="ordered locus">At2g22640</name>
    <name type="ORF">T9I22.8</name>
</gene>
<organism>
    <name type="scientific">Arabidopsis thaliana</name>
    <name type="common">Mouse-ear cress</name>
    <dbReference type="NCBI Taxonomy" id="3702"/>
    <lineage>
        <taxon>Eukaryota</taxon>
        <taxon>Viridiplantae</taxon>
        <taxon>Streptophyta</taxon>
        <taxon>Embryophyta</taxon>
        <taxon>Tracheophyta</taxon>
        <taxon>Spermatophyta</taxon>
        <taxon>Magnoliopsida</taxon>
        <taxon>eudicotyledons</taxon>
        <taxon>Gunneridae</taxon>
        <taxon>Pentapetalae</taxon>
        <taxon>rosids</taxon>
        <taxon>malvids</taxon>
        <taxon>Brassicales</taxon>
        <taxon>Brassicaceae</taxon>
        <taxon>Camelineae</taxon>
        <taxon>Arabidopsis</taxon>
    </lineage>
</organism>
<protein>
    <recommendedName>
        <fullName>Protein BRICK 1</fullName>
        <shortName>AtBRK1</shortName>
    </recommendedName>
</protein>
<dbReference type="EMBL" id="AC006340">
    <property type="protein sequence ID" value="AAD15572.1"/>
    <property type="status" value="ALT_SEQ"/>
    <property type="molecule type" value="Genomic_DNA"/>
</dbReference>
<dbReference type="EMBL" id="CP002685">
    <property type="protein sequence ID" value="AEC07332.1"/>
    <property type="molecule type" value="Genomic_DNA"/>
</dbReference>
<dbReference type="EMBL" id="AF370530">
    <property type="protein sequence ID" value="AAK48957.1"/>
    <property type="molecule type" value="mRNA"/>
</dbReference>
<dbReference type="EMBL" id="BT000017">
    <property type="protein sequence ID" value="AAN15336.1"/>
    <property type="molecule type" value="mRNA"/>
</dbReference>
<dbReference type="EMBL" id="AY085644">
    <property type="protein sequence ID" value="AAM62865.1"/>
    <property type="molecule type" value="mRNA"/>
</dbReference>
<dbReference type="PIR" id="A84615">
    <property type="entry name" value="A84615"/>
</dbReference>
<dbReference type="RefSeq" id="NP_179849.2">
    <property type="nucleotide sequence ID" value="NM_127829.3"/>
</dbReference>
<dbReference type="SMR" id="Q94JY4"/>
<dbReference type="BioGRID" id="2148">
    <property type="interactions" value="13"/>
</dbReference>
<dbReference type="FunCoup" id="Q94JY4">
    <property type="interactions" value="3519"/>
</dbReference>
<dbReference type="IntAct" id="Q94JY4">
    <property type="interactions" value="12"/>
</dbReference>
<dbReference type="STRING" id="3702.Q94JY4"/>
<dbReference type="PaxDb" id="3702-AT2G22640.1"/>
<dbReference type="ProteomicsDB" id="240705"/>
<dbReference type="EnsemblPlants" id="AT2G22640.1">
    <property type="protein sequence ID" value="AT2G22640.1"/>
    <property type="gene ID" value="AT2G22640"/>
</dbReference>
<dbReference type="GeneID" id="816795"/>
<dbReference type="Gramene" id="AT2G22640.1">
    <property type="protein sequence ID" value="AT2G22640.1"/>
    <property type="gene ID" value="AT2G22640"/>
</dbReference>
<dbReference type="KEGG" id="ath:AT2G22640"/>
<dbReference type="Araport" id="AT2G22640"/>
<dbReference type="TAIR" id="AT2G22640">
    <property type="gene designation" value="BRK1"/>
</dbReference>
<dbReference type="eggNOG" id="ENOG502S3PY">
    <property type="taxonomic scope" value="Eukaryota"/>
</dbReference>
<dbReference type="HOGENOM" id="CLU_175202_0_0_1"/>
<dbReference type="InParanoid" id="Q94JY4"/>
<dbReference type="OMA" id="WEQREFI"/>
<dbReference type="OrthoDB" id="1883432at2759"/>
<dbReference type="PhylomeDB" id="Q94JY4"/>
<dbReference type="PRO" id="PR:Q94JY4"/>
<dbReference type="Proteomes" id="UP000006548">
    <property type="component" value="Chromosome 2"/>
</dbReference>
<dbReference type="ExpressionAtlas" id="Q94JY4">
    <property type="expression patterns" value="baseline and differential"/>
</dbReference>
<dbReference type="GO" id="GO:0071944">
    <property type="term" value="C:cell periphery"/>
    <property type="evidence" value="ECO:0000314"/>
    <property type="project" value="TAIR"/>
</dbReference>
<dbReference type="GO" id="GO:0005856">
    <property type="term" value="C:cytoskeleton"/>
    <property type="evidence" value="ECO:0007669"/>
    <property type="project" value="UniProtKB-SubCell"/>
</dbReference>
<dbReference type="GO" id="GO:0005886">
    <property type="term" value="C:plasma membrane"/>
    <property type="evidence" value="ECO:0000314"/>
    <property type="project" value="TAIR"/>
</dbReference>
<dbReference type="GO" id="GO:0031209">
    <property type="term" value="C:SCAR complex"/>
    <property type="evidence" value="ECO:0000304"/>
    <property type="project" value="TAIR"/>
</dbReference>
<dbReference type="GO" id="GO:0042802">
    <property type="term" value="F:identical protein binding"/>
    <property type="evidence" value="ECO:0000314"/>
    <property type="project" value="UniProtKB"/>
</dbReference>
<dbReference type="GO" id="GO:0044877">
    <property type="term" value="F:protein-containing complex binding"/>
    <property type="evidence" value="ECO:0007669"/>
    <property type="project" value="InterPro"/>
</dbReference>
<dbReference type="GO" id="GO:0030041">
    <property type="term" value="P:actin filament polymerization"/>
    <property type="evidence" value="ECO:0000304"/>
    <property type="project" value="TAIR"/>
</dbReference>
<dbReference type="GO" id="GO:0045010">
    <property type="term" value="P:actin nucleation"/>
    <property type="evidence" value="ECO:0000304"/>
    <property type="project" value="TAIR"/>
</dbReference>
<dbReference type="GO" id="GO:0000902">
    <property type="term" value="P:cell morphogenesis"/>
    <property type="evidence" value="ECO:0000315"/>
    <property type="project" value="TAIR"/>
</dbReference>
<dbReference type="GO" id="GO:0010090">
    <property type="term" value="P:trichome morphogenesis"/>
    <property type="evidence" value="ECO:0000315"/>
    <property type="project" value="TAIR"/>
</dbReference>
<dbReference type="FunFam" id="1.20.5.110:FF:000042">
    <property type="entry name" value="protein BRICK 1"/>
    <property type="match status" value="1"/>
</dbReference>
<dbReference type="Gene3D" id="1.20.5.110">
    <property type="match status" value="1"/>
</dbReference>
<dbReference type="InterPro" id="IPR033378">
    <property type="entry name" value="BRICK1"/>
</dbReference>
<dbReference type="PANTHER" id="PTHR33668">
    <property type="entry name" value="PROTEIN BRICK1"/>
    <property type="match status" value="1"/>
</dbReference>
<dbReference type="PANTHER" id="PTHR33668:SF1">
    <property type="entry name" value="PROTEIN BRICK1"/>
    <property type="match status" value="1"/>
</dbReference>
<evidence type="ECO:0000255" key="1"/>
<evidence type="ECO:0000269" key="2">
    <source>
    </source>
</evidence>
<evidence type="ECO:0000269" key="3">
    <source>
    </source>
</evidence>
<evidence type="ECO:0000269" key="4">
    <source>
    </source>
</evidence>
<evidence type="ECO:0000305" key="5"/>
<sequence>MAKAGGITNAVNVGIAVQADWENREFISHISLNVRRLFEFLVQFESTTKSKLASLNEKLDLLERRLEMLEVQVSTATANPSLFAT</sequence>
<feature type="chain" id="PRO_0000165368" description="Protein BRICK 1">
    <location>
        <begin position="1"/>
        <end position="85"/>
    </location>
</feature>
<feature type="coiled-coil region" evidence="1">
    <location>
        <begin position="45"/>
        <end position="79"/>
    </location>
</feature>
<name>BRK1_ARATH</name>
<proteinExistence type="evidence at protein level"/>
<reference key="1">
    <citation type="journal article" date="1999" name="Nature">
        <title>Sequence and analysis of chromosome 2 of the plant Arabidopsis thaliana.</title>
        <authorList>
            <person name="Lin X."/>
            <person name="Kaul S."/>
            <person name="Rounsley S.D."/>
            <person name="Shea T.P."/>
            <person name="Benito M.-I."/>
            <person name="Town C.D."/>
            <person name="Fujii C.Y."/>
            <person name="Mason T.M."/>
            <person name="Bowman C.L."/>
            <person name="Barnstead M.E."/>
            <person name="Feldblyum T.V."/>
            <person name="Buell C.R."/>
            <person name="Ketchum K.A."/>
            <person name="Lee J.J."/>
            <person name="Ronning C.M."/>
            <person name="Koo H.L."/>
            <person name="Moffat K.S."/>
            <person name="Cronin L.A."/>
            <person name="Shen M."/>
            <person name="Pai G."/>
            <person name="Van Aken S."/>
            <person name="Umayam L."/>
            <person name="Tallon L.J."/>
            <person name="Gill J.E."/>
            <person name="Adams M.D."/>
            <person name="Carrera A.J."/>
            <person name="Creasy T.H."/>
            <person name="Goodman H.M."/>
            <person name="Somerville C.R."/>
            <person name="Copenhaver G.P."/>
            <person name="Preuss D."/>
            <person name="Nierman W.C."/>
            <person name="White O."/>
            <person name="Eisen J.A."/>
            <person name="Salzberg S.L."/>
            <person name="Fraser C.M."/>
            <person name="Venter J.C."/>
        </authorList>
    </citation>
    <scope>NUCLEOTIDE SEQUENCE [LARGE SCALE GENOMIC DNA]</scope>
    <source>
        <strain>cv. Columbia</strain>
    </source>
</reference>
<reference key="2">
    <citation type="journal article" date="2017" name="Plant J.">
        <title>Araport11: a complete reannotation of the Arabidopsis thaliana reference genome.</title>
        <authorList>
            <person name="Cheng C.Y."/>
            <person name="Krishnakumar V."/>
            <person name="Chan A.P."/>
            <person name="Thibaud-Nissen F."/>
            <person name="Schobel S."/>
            <person name="Town C.D."/>
        </authorList>
    </citation>
    <scope>GENOME REANNOTATION</scope>
    <source>
        <strain>cv. Columbia</strain>
    </source>
</reference>
<reference key="3">
    <citation type="journal article" date="2003" name="Science">
        <title>Empirical analysis of transcriptional activity in the Arabidopsis genome.</title>
        <authorList>
            <person name="Yamada K."/>
            <person name="Lim J."/>
            <person name="Dale J.M."/>
            <person name="Chen H."/>
            <person name="Shinn P."/>
            <person name="Palm C.J."/>
            <person name="Southwick A.M."/>
            <person name="Wu H.C."/>
            <person name="Kim C.J."/>
            <person name="Nguyen M."/>
            <person name="Pham P.K."/>
            <person name="Cheuk R.F."/>
            <person name="Karlin-Newmann G."/>
            <person name="Liu S.X."/>
            <person name="Lam B."/>
            <person name="Sakano H."/>
            <person name="Wu T."/>
            <person name="Yu G."/>
            <person name="Miranda M."/>
            <person name="Quach H.L."/>
            <person name="Tripp M."/>
            <person name="Chang C.H."/>
            <person name="Lee J.M."/>
            <person name="Toriumi M.J."/>
            <person name="Chan M.M."/>
            <person name="Tang C.C."/>
            <person name="Onodera C.S."/>
            <person name="Deng J.M."/>
            <person name="Akiyama K."/>
            <person name="Ansari Y."/>
            <person name="Arakawa T."/>
            <person name="Banh J."/>
            <person name="Banno F."/>
            <person name="Bowser L."/>
            <person name="Brooks S.Y."/>
            <person name="Carninci P."/>
            <person name="Chao Q."/>
            <person name="Choy N."/>
            <person name="Enju A."/>
            <person name="Goldsmith A.D."/>
            <person name="Gurjal M."/>
            <person name="Hansen N.F."/>
            <person name="Hayashizaki Y."/>
            <person name="Johnson-Hopson C."/>
            <person name="Hsuan V.W."/>
            <person name="Iida K."/>
            <person name="Karnes M."/>
            <person name="Khan S."/>
            <person name="Koesema E."/>
            <person name="Ishida J."/>
            <person name="Jiang P.X."/>
            <person name="Jones T."/>
            <person name="Kawai J."/>
            <person name="Kamiya A."/>
            <person name="Meyers C."/>
            <person name="Nakajima M."/>
            <person name="Narusaka M."/>
            <person name="Seki M."/>
            <person name="Sakurai T."/>
            <person name="Satou M."/>
            <person name="Tamse R."/>
            <person name="Vaysberg M."/>
            <person name="Wallender E.K."/>
            <person name="Wong C."/>
            <person name="Yamamura Y."/>
            <person name="Yuan S."/>
            <person name="Shinozaki K."/>
            <person name="Davis R.W."/>
            <person name="Theologis A."/>
            <person name="Ecker J.R."/>
        </authorList>
    </citation>
    <scope>NUCLEOTIDE SEQUENCE [LARGE SCALE MRNA]</scope>
    <source>
        <strain>cv. Columbia</strain>
    </source>
</reference>
<reference key="4">
    <citation type="submission" date="2002-03" db="EMBL/GenBank/DDBJ databases">
        <title>Full-length cDNA from Arabidopsis thaliana.</title>
        <authorList>
            <person name="Brover V.V."/>
            <person name="Troukhan M.E."/>
            <person name="Alexandrov N.A."/>
            <person name="Lu Y.-P."/>
            <person name="Flavell R.B."/>
            <person name="Feldmann K.A."/>
        </authorList>
    </citation>
    <scope>NUCLEOTIDE SEQUENCE [LARGE SCALE MRNA]</scope>
</reference>
<reference key="5">
    <citation type="journal article" date="2002" name="Curr. Biol.">
        <title>A small, novel protein highly conserved in plants and animals promotes the polarized growth and division of maize leaf epidermal cells.</title>
        <authorList>
            <person name="Frank M.J."/>
            <person name="Smith L.G."/>
        </authorList>
    </citation>
    <scope>IDENTIFICATION</scope>
    <scope>FUNCTION</scope>
</reference>
<reference key="6">
    <citation type="journal article" date="2004" name="Plant Cell">
        <title>NAPP and PIRP encode subunits of a putative wave regulatory protein complex involved in plant cell morphogenesis.</title>
        <authorList>
            <person name="Brembu T."/>
            <person name="Winge P."/>
            <person name="Seem M."/>
            <person name="Bones A.M."/>
        </authorList>
    </citation>
    <scope>TISSUE SPECIFICITY</scope>
</reference>
<reference key="7">
    <citation type="journal article" date="2004" name="Curr. Biol.">
        <title>Arabidopsis GNARLED encodes a NAP125 homolog that positively regulates ARP2/3.</title>
        <authorList>
            <person name="El-Din El-Assal S."/>
            <person name="Le J."/>
            <person name="Basu D."/>
            <person name="Mallery E.L."/>
            <person name="Szymanski D.B."/>
        </authorList>
    </citation>
    <scope>TISSUE SPECIFICITY</scope>
</reference>
<reference key="8">
    <citation type="journal article" date="2004" name="Proc. Natl. Acad. Sci. U.S.A.">
        <title>Activation of Arp2/3 complex-dependent actin polymerization by plant proteins distantly related to Scar/WAVE.</title>
        <authorList>
            <person name="Frank M."/>
            <person name="Egile C."/>
            <person name="Dyachok J."/>
            <person name="Djakovic S."/>
            <person name="Nolasco M."/>
            <person name="Li R."/>
            <person name="Smith L.G."/>
        </authorList>
    </citation>
    <scope>INTERACTION WITH SCAR1 AND SCAR3</scope>
</reference>
<reference key="9">
    <citation type="journal article" date="2005" name="Plant Cell">
        <title>IRREGULAR TRICHOME BRANCH1 in Arabidopsis encodes a plant homolog of the actin-related protein2/3 complex activator Scar/WAVE that regulates actin and microtubule organization.</title>
        <authorList>
            <person name="Zhang X."/>
            <person name="Dyachok J."/>
            <person name="Krishnakumar S."/>
            <person name="Smith L.G."/>
            <person name="Oppenheimer D.G."/>
        </authorList>
    </citation>
    <scope>INTERACTION WITH SCAR2</scope>
</reference>
<comment type="function">
    <text evidence="2">Involved in regulation of actin and microtubule organization. Part of a WAVE complex that activates the Arp2/3 complex.</text>
</comment>
<comment type="subunit">
    <text>Binds SCAR1 and/or SCAR2 and/or SCAR3.</text>
</comment>
<comment type="interaction">
    <interactant intactId="EBI-1547691">
        <id>Q94JY4</id>
    </interactant>
    <interactant intactId="EBI-1547691">
        <id>Q94JY4</id>
        <label>BRK1</label>
    </interactant>
    <organismsDiffer>false</organismsDiffer>
    <experiments>3</experiments>
</comment>
<comment type="interaction">
    <interactant intactId="EBI-1547691">
        <id>Q94JY4</id>
    </interactant>
    <interactant intactId="EBI-1547775">
        <id>Q6AWX6</id>
        <label>SCAR1</label>
    </interactant>
    <organismsDiffer>false</organismsDiffer>
    <experiments>2</experiments>
</comment>
<comment type="interaction">
    <interactant intactId="EBI-1547691">
        <id>Q94JY4</id>
    </interactant>
    <interactant intactId="EBI-1547795">
        <id>Q5XPJ9</id>
        <label>SCAR2</label>
    </interactant>
    <organismsDiffer>false</organismsDiffer>
    <experiments>3</experiments>
</comment>
<comment type="interaction">
    <interactant intactId="EBI-1547691">
        <id>Q94JY4</id>
    </interactant>
    <interactant intactId="EBI-1547699">
        <id>Q9LP46</id>
        <label>SCAR3</label>
    </interactant>
    <organismsDiffer>false</organismsDiffer>
    <experiments>3</experiments>
</comment>
<comment type="subcellular location">
    <subcellularLocation>
        <location>Cytoplasm</location>
        <location>Cytoskeleton</location>
    </subcellularLocation>
</comment>
<comment type="tissue specificity">
    <text evidence="3 4">Expressed in roots, root hairs, hypocotyls, cotyledons, stems, leaves, trichomes, and flowers.</text>
</comment>
<comment type="similarity">
    <text evidence="5">Belongs to the BRK1 family.</text>
</comment>
<comment type="sequence caution" evidence="5">
    <conflict type="erroneous gene model prediction">
        <sequence resource="EMBL-CDS" id="AAD15572"/>
    </conflict>
</comment>
<keyword id="KW-0175">Coiled coil</keyword>
<keyword id="KW-0963">Cytoplasm</keyword>
<keyword id="KW-0206">Cytoskeleton</keyword>
<keyword id="KW-1185">Reference proteome</keyword>